<protein>
    <recommendedName>
        <fullName evidence="15">POU domain, class 2, transcription factor 2</fullName>
    </recommendedName>
    <alternativeName>
        <fullName>Lymphoid-restricted immunoglobulin octamer-binding protein NF-A2</fullName>
    </alternativeName>
    <alternativeName>
        <fullName>Octamer-binding protein 2</fullName>
        <shortName>Oct-2</shortName>
    </alternativeName>
    <alternativeName>
        <fullName>Octamer-binding transcription factor 2</fullName>
        <shortName>OTF-2</shortName>
    </alternativeName>
</protein>
<dbReference type="EMBL" id="X53654">
    <property type="protein sequence ID" value="CAA37702.1"/>
    <property type="molecule type" value="mRNA"/>
</dbReference>
<dbReference type="EMBL" id="X57936">
    <property type="protein sequence ID" value="CAA41004.1"/>
    <property type="molecule type" value="mRNA"/>
</dbReference>
<dbReference type="EMBL" id="X57937">
    <property type="protein sequence ID" value="CAA41005.1"/>
    <property type="molecule type" value="mRNA"/>
</dbReference>
<dbReference type="EMBL" id="X57938">
    <property type="protein sequence ID" value="CAA41006.1"/>
    <property type="molecule type" value="mRNA"/>
</dbReference>
<dbReference type="EMBL" id="X57939">
    <property type="protein sequence ID" value="CAA41007.1"/>
    <property type="molecule type" value="mRNA"/>
</dbReference>
<dbReference type="EMBL" id="X57940">
    <property type="protein sequence ID" value="CAA41008.1"/>
    <property type="molecule type" value="mRNA"/>
</dbReference>
<dbReference type="EMBL" id="X57941">
    <property type="protein sequence ID" value="CAA41009.1"/>
    <property type="molecule type" value="mRNA"/>
</dbReference>
<dbReference type="EMBL" id="AY746973">
    <property type="protein sequence ID" value="AAU95616.1"/>
    <property type="molecule type" value="mRNA"/>
</dbReference>
<dbReference type="EMBL" id="AY746974">
    <property type="protein sequence ID" value="AAU95617.1"/>
    <property type="status" value="ALT_INIT"/>
    <property type="molecule type" value="mRNA"/>
</dbReference>
<dbReference type="EMBL" id="AK156322">
    <property type="protein sequence ID" value="BAE33673.1"/>
    <property type="status" value="ALT_FRAME"/>
    <property type="molecule type" value="mRNA"/>
</dbReference>
<dbReference type="EMBL" id="BC104488">
    <property type="protein sequence ID" value="AAI04489.1"/>
    <property type="molecule type" value="mRNA"/>
</dbReference>
<dbReference type="EMBL" id="BC105647">
    <property type="protein sequence ID" value="AAI05648.1"/>
    <property type="molecule type" value="mRNA"/>
</dbReference>
<dbReference type="EMBL" id="BC105920">
    <property type="protein sequence ID" value="AAI05921.1"/>
    <property type="molecule type" value="mRNA"/>
</dbReference>
<dbReference type="EMBL" id="BC105921">
    <property type="protein sequence ID" value="AAI05922.1"/>
    <property type="molecule type" value="mRNA"/>
</dbReference>
<dbReference type="EMBL" id="X81031">
    <property type="protein sequence ID" value="CAA56934.1"/>
    <property type="molecule type" value="Genomic_DNA"/>
</dbReference>
<dbReference type="EMBL" id="X51961">
    <property type="protein sequence ID" value="CAA36220.1"/>
    <property type="molecule type" value="mRNA"/>
</dbReference>
<dbReference type="EMBL" id="X57089">
    <property type="protein sequence ID" value="CAA40369.1"/>
    <property type="molecule type" value="mRNA"/>
</dbReference>
<dbReference type="EMBL" id="S55236">
    <property type="protein sequence ID" value="AAA11815.1"/>
    <property type="molecule type" value="mRNA"/>
</dbReference>
<dbReference type="CCDS" id="CCDS39834.1">
    <molecule id="Q00196-2"/>
</dbReference>
<dbReference type="CCDS" id="CCDS52143.1">
    <molecule id="Q00196-1"/>
</dbReference>
<dbReference type="CCDS" id="CCDS52144.1">
    <molecule id="Q00196-5"/>
</dbReference>
<dbReference type="CCDS" id="CCDS52145.1">
    <molecule id="Q00196-3"/>
</dbReference>
<dbReference type="PIR" id="S22539">
    <property type="entry name" value="S22539"/>
</dbReference>
<dbReference type="PIR" id="S22542">
    <property type="entry name" value="S22542"/>
</dbReference>
<dbReference type="PIR" id="S22543">
    <property type="entry name" value="S22543"/>
</dbReference>
<dbReference type="PIR" id="S22544">
    <property type="entry name" value="S22544"/>
</dbReference>
<dbReference type="RefSeq" id="NP_001157026.1">
    <molecule id="Q00196-5"/>
    <property type="nucleotide sequence ID" value="NM_001163554.2"/>
</dbReference>
<dbReference type="RefSeq" id="NP_001157027.1">
    <molecule id="Q00196-3"/>
    <property type="nucleotide sequence ID" value="NM_001163555.2"/>
</dbReference>
<dbReference type="RefSeq" id="NP_001157028.1">
    <molecule id="Q00196-1"/>
    <property type="nucleotide sequence ID" value="NM_001163556.2"/>
</dbReference>
<dbReference type="RefSeq" id="NP_001404069.1">
    <molecule id="Q00196-6"/>
    <property type="nucleotide sequence ID" value="NM_001417140.1"/>
</dbReference>
<dbReference type="RefSeq" id="NP_035268.2">
    <molecule id="Q00196-2"/>
    <property type="nucleotide sequence ID" value="NM_011138.3"/>
</dbReference>
<dbReference type="RefSeq" id="XP_006539722.1">
    <property type="nucleotide sequence ID" value="XM_006539659.2"/>
</dbReference>
<dbReference type="SMR" id="Q00196"/>
<dbReference type="FunCoup" id="Q00196">
    <property type="interactions" value="1846"/>
</dbReference>
<dbReference type="STRING" id="10090.ENSMUSP00000104056"/>
<dbReference type="GlyGen" id="Q00196">
    <property type="glycosylation" value="1 site"/>
</dbReference>
<dbReference type="iPTMnet" id="Q00196"/>
<dbReference type="PhosphoSitePlus" id="Q00196"/>
<dbReference type="PaxDb" id="10090-ENSMUSP00000104056"/>
<dbReference type="ProteomicsDB" id="289642">
    <molecule id="Q00196-1"/>
</dbReference>
<dbReference type="ProteomicsDB" id="289643">
    <molecule id="Q00196-2"/>
</dbReference>
<dbReference type="ProteomicsDB" id="289644">
    <molecule id="Q00196-3"/>
</dbReference>
<dbReference type="ProteomicsDB" id="289645">
    <molecule id="Q00196-4"/>
</dbReference>
<dbReference type="ProteomicsDB" id="289646">
    <molecule id="Q00196-5"/>
</dbReference>
<dbReference type="ProteomicsDB" id="289647">
    <molecule id="Q00196-6"/>
</dbReference>
<dbReference type="ProteomicsDB" id="289648">
    <molecule id="Q00196-7"/>
</dbReference>
<dbReference type="Pumba" id="Q00196"/>
<dbReference type="Antibodypedia" id="3745">
    <property type="antibodies" value="596 antibodies from 43 providers"/>
</dbReference>
<dbReference type="DNASU" id="18987"/>
<dbReference type="Ensembl" id="ENSMUST00000098679.10">
    <molecule id="Q00196-7"/>
    <property type="protein sequence ID" value="ENSMUSP00000096276.3"/>
    <property type="gene ID" value="ENSMUSG00000008496.20"/>
</dbReference>
<dbReference type="Ensembl" id="ENSMUST00000108413.8">
    <molecule id="Q00196-4"/>
    <property type="protein sequence ID" value="ENSMUSP00000104051.2"/>
    <property type="gene ID" value="ENSMUSG00000008496.20"/>
</dbReference>
<dbReference type="Ensembl" id="ENSMUST00000108415.10">
    <molecule id="Q00196-2"/>
    <property type="protein sequence ID" value="ENSMUSP00000104053.3"/>
    <property type="gene ID" value="ENSMUSG00000008496.20"/>
</dbReference>
<dbReference type="Ensembl" id="ENSMUST00000108416.10">
    <molecule id="Q00196-6"/>
    <property type="protein sequence ID" value="ENSMUSP00000104054.3"/>
    <property type="gene ID" value="ENSMUSG00000008496.20"/>
</dbReference>
<dbReference type="Ensembl" id="ENSMUST00000108417.10">
    <molecule id="Q00196-3"/>
    <property type="protein sequence ID" value="ENSMUSP00000104055.3"/>
    <property type="gene ID" value="ENSMUSG00000008496.20"/>
</dbReference>
<dbReference type="Ensembl" id="ENSMUST00000108418.11">
    <molecule id="Q00196-5"/>
    <property type="protein sequence ID" value="ENSMUSP00000104056.4"/>
    <property type="gene ID" value="ENSMUSG00000008496.20"/>
</dbReference>
<dbReference type="Ensembl" id="ENSMUST00000175774.9">
    <molecule id="Q00196-1"/>
    <property type="protein sequence ID" value="ENSMUSP00000135075.2"/>
    <property type="gene ID" value="ENSMUSG00000008496.20"/>
</dbReference>
<dbReference type="GeneID" id="18987"/>
<dbReference type="KEGG" id="mmu:18987"/>
<dbReference type="UCSC" id="uc009frm.1">
    <molecule id="Q00196-7"/>
    <property type="organism name" value="mouse"/>
</dbReference>
<dbReference type="UCSC" id="uc009frn.2">
    <molecule id="Q00196-2"/>
    <property type="organism name" value="mouse"/>
</dbReference>
<dbReference type="UCSC" id="uc009fro.2">
    <molecule id="Q00196-5"/>
    <property type="organism name" value="mouse"/>
</dbReference>
<dbReference type="UCSC" id="uc009frp.2">
    <molecule id="Q00196-1"/>
    <property type="organism name" value="mouse"/>
</dbReference>
<dbReference type="UCSC" id="uc009frq.2">
    <molecule id="Q00196-3"/>
    <property type="organism name" value="mouse"/>
</dbReference>
<dbReference type="UCSC" id="uc009frr.2">
    <molecule id="Q00196-4"/>
    <property type="organism name" value="mouse"/>
</dbReference>
<dbReference type="UCSC" id="uc012ffp.1">
    <molecule id="Q00196-6"/>
    <property type="organism name" value="mouse"/>
</dbReference>
<dbReference type="AGR" id="MGI:101897"/>
<dbReference type="CTD" id="5452"/>
<dbReference type="MGI" id="MGI:101897">
    <property type="gene designation" value="Pou2f2"/>
</dbReference>
<dbReference type="VEuPathDB" id="HostDB:ENSMUSG00000008496"/>
<dbReference type="eggNOG" id="KOG3802">
    <property type="taxonomic scope" value="Eukaryota"/>
</dbReference>
<dbReference type="GeneTree" id="ENSGT00940000160115"/>
<dbReference type="HOGENOM" id="CLU_013065_4_1_1"/>
<dbReference type="InParanoid" id="Q00196"/>
<dbReference type="OMA" id="AMDYSHL"/>
<dbReference type="OrthoDB" id="587628at33208"/>
<dbReference type="PhylomeDB" id="Q00196"/>
<dbReference type="TreeFam" id="TF316413"/>
<dbReference type="Reactome" id="R-MMU-6807505">
    <property type="pathway name" value="RNA polymerase II transcribes snRNA genes"/>
</dbReference>
<dbReference type="BioGRID-ORCS" id="18987">
    <property type="hits" value="2 hits in 79 CRISPR screens"/>
</dbReference>
<dbReference type="ChiTaRS" id="Pou2f2">
    <property type="organism name" value="mouse"/>
</dbReference>
<dbReference type="PRO" id="PR:Q00196"/>
<dbReference type="Proteomes" id="UP000000589">
    <property type="component" value="Chromosome 7"/>
</dbReference>
<dbReference type="RNAct" id="Q00196">
    <property type="molecule type" value="protein"/>
</dbReference>
<dbReference type="Bgee" id="ENSMUSG00000008496">
    <property type="expression patterns" value="Expressed in embryonic brain and 119 other cell types or tissues"/>
</dbReference>
<dbReference type="ExpressionAtlas" id="Q00196">
    <property type="expression patterns" value="baseline and differential"/>
</dbReference>
<dbReference type="GO" id="GO:0005737">
    <property type="term" value="C:cytoplasm"/>
    <property type="evidence" value="ECO:0007669"/>
    <property type="project" value="UniProtKB-SubCell"/>
</dbReference>
<dbReference type="GO" id="GO:0005654">
    <property type="term" value="C:nucleoplasm"/>
    <property type="evidence" value="ECO:0007669"/>
    <property type="project" value="Ensembl"/>
</dbReference>
<dbReference type="GO" id="GO:0005634">
    <property type="term" value="C:nucleus"/>
    <property type="evidence" value="ECO:0000314"/>
    <property type="project" value="MGI"/>
</dbReference>
<dbReference type="GO" id="GO:0003677">
    <property type="term" value="F:DNA binding"/>
    <property type="evidence" value="ECO:0000314"/>
    <property type="project" value="MGI"/>
</dbReference>
<dbReference type="GO" id="GO:0001228">
    <property type="term" value="F:DNA-binding transcription activator activity, RNA polymerase II-specific"/>
    <property type="evidence" value="ECO:0000314"/>
    <property type="project" value="NTNU_SB"/>
</dbReference>
<dbReference type="GO" id="GO:0003700">
    <property type="term" value="F:DNA-binding transcription factor activity"/>
    <property type="evidence" value="ECO:0000314"/>
    <property type="project" value="UniProtKB"/>
</dbReference>
<dbReference type="GO" id="GO:0019904">
    <property type="term" value="F:protein domain specific binding"/>
    <property type="evidence" value="ECO:0000353"/>
    <property type="project" value="MGI"/>
</dbReference>
<dbReference type="GO" id="GO:0000978">
    <property type="term" value="F:RNA polymerase II cis-regulatory region sequence-specific DNA binding"/>
    <property type="evidence" value="ECO:0000314"/>
    <property type="project" value="NTNU_SB"/>
</dbReference>
<dbReference type="GO" id="GO:0043565">
    <property type="term" value="F:sequence-specific DNA binding"/>
    <property type="evidence" value="ECO:0000314"/>
    <property type="project" value="MGI"/>
</dbReference>
<dbReference type="GO" id="GO:0015606">
    <property type="term" value="F:spermidine transmembrane transporter activity"/>
    <property type="evidence" value="ECO:0000314"/>
    <property type="project" value="UniProtKB"/>
</dbReference>
<dbReference type="GO" id="GO:0000976">
    <property type="term" value="F:transcription cis-regulatory region binding"/>
    <property type="evidence" value="ECO:0000314"/>
    <property type="project" value="UniProtKB"/>
</dbReference>
<dbReference type="GO" id="GO:0048469">
    <property type="term" value="P:cell maturation"/>
    <property type="evidence" value="ECO:0000315"/>
    <property type="project" value="MGI"/>
</dbReference>
<dbReference type="GO" id="GO:0098586">
    <property type="term" value="P:cellular response to virus"/>
    <property type="evidence" value="ECO:0000315"/>
    <property type="project" value="UniProtKB"/>
</dbReference>
<dbReference type="GO" id="GO:0002335">
    <property type="term" value="P:mature B cell differentiation"/>
    <property type="evidence" value="ECO:0000315"/>
    <property type="project" value="MGI"/>
</dbReference>
<dbReference type="GO" id="GO:0045893">
    <property type="term" value="P:positive regulation of DNA-templated transcription"/>
    <property type="evidence" value="ECO:0000314"/>
    <property type="project" value="MGI"/>
</dbReference>
<dbReference type="GO" id="GO:0032755">
    <property type="term" value="P:positive regulation of interleukin-6 production"/>
    <property type="evidence" value="ECO:0000314"/>
    <property type="project" value="UniProtKB"/>
</dbReference>
<dbReference type="GO" id="GO:0045944">
    <property type="term" value="P:positive regulation of transcription by RNA polymerase II"/>
    <property type="evidence" value="ECO:0000314"/>
    <property type="project" value="UniProtKB"/>
</dbReference>
<dbReference type="GO" id="GO:0006355">
    <property type="term" value="P:regulation of DNA-templated transcription"/>
    <property type="evidence" value="ECO:0000314"/>
    <property type="project" value="MGI"/>
</dbReference>
<dbReference type="GO" id="GO:0015848">
    <property type="term" value="P:spermidine transport"/>
    <property type="evidence" value="ECO:0000314"/>
    <property type="project" value="UniProtKB"/>
</dbReference>
<dbReference type="CDD" id="cd00086">
    <property type="entry name" value="homeodomain"/>
    <property type="match status" value="1"/>
</dbReference>
<dbReference type="FunFam" id="1.10.10.60:FF:000005">
    <property type="entry name" value="POU domain protein"/>
    <property type="match status" value="1"/>
</dbReference>
<dbReference type="FunFam" id="1.10.260.40:FF:000001">
    <property type="entry name" value="POU domain protein"/>
    <property type="match status" value="1"/>
</dbReference>
<dbReference type="Gene3D" id="1.10.10.60">
    <property type="entry name" value="Homeodomain-like"/>
    <property type="match status" value="1"/>
</dbReference>
<dbReference type="Gene3D" id="1.10.260.40">
    <property type="entry name" value="lambda repressor-like DNA-binding domains"/>
    <property type="match status" value="1"/>
</dbReference>
<dbReference type="InterPro" id="IPR001356">
    <property type="entry name" value="HD"/>
</dbReference>
<dbReference type="InterPro" id="IPR017970">
    <property type="entry name" value="Homeobox_CS"/>
</dbReference>
<dbReference type="InterPro" id="IPR009057">
    <property type="entry name" value="Homeodomain-like_sf"/>
</dbReference>
<dbReference type="InterPro" id="IPR010982">
    <property type="entry name" value="Lambda_DNA-bd_dom_sf"/>
</dbReference>
<dbReference type="InterPro" id="IPR013847">
    <property type="entry name" value="POU"/>
</dbReference>
<dbReference type="InterPro" id="IPR000327">
    <property type="entry name" value="POU_dom"/>
</dbReference>
<dbReference type="InterPro" id="IPR050255">
    <property type="entry name" value="POU_domain_TF"/>
</dbReference>
<dbReference type="InterPro" id="IPR000972">
    <property type="entry name" value="TF_octamer"/>
</dbReference>
<dbReference type="PANTHER" id="PTHR11636">
    <property type="entry name" value="POU DOMAIN"/>
    <property type="match status" value="1"/>
</dbReference>
<dbReference type="PANTHER" id="PTHR11636:SF46">
    <property type="entry name" value="POU DOMAIN, CLASS 2, TRANSCRIPTION FACTOR 2"/>
    <property type="match status" value="1"/>
</dbReference>
<dbReference type="Pfam" id="PF00046">
    <property type="entry name" value="Homeodomain"/>
    <property type="match status" value="1"/>
</dbReference>
<dbReference type="Pfam" id="PF00157">
    <property type="entry name" value="Pou"/>
    <property type="match status" value="1"/>
</dbReference>
<dbReference type="PRINTS" id="PR00029">
    <property type="entry name" value="OCTAMER"/>
</dbReference>
<dbReference type="PRINTS" id="PR00028">
    <property type="entry name" value="POUDOMAIN"/>
</dbReference>
<dbReference type="SMART" id="SM00389">
    <property type="entry name" value="HOX"/>
    <property type="match status" value="1"/>
</dbReference>
<dbReference type="SMART" id="SM00352">
    <property type="entry name" value="POU"/>
    <property type="match status" value="1"/>
</dbReference>
<dbReference type="SUPFAM" id="SSF46689">
    <property type="entry name" value="Homeodomain-like"/>
    <property type="match status" value="1"/>
</dbReference>
<dbReference type="SUPFAM" id="SSF47413">
    <property type="entry name" value="lambda repressor-like DNA-binding domains"/>
    <property type="match status" value="1"/>
</dbReference>
<dbReference type="PROSITE" id="PS00027">
    <property type="entry name" value="HOMEOBOX_1"/>
    <property type="match status" value="1"/>
</dbReference>
<dbReference type="PROSITE" id="PS50071">
    <property type="entry name" value="HOMEOBOX_2"/>
    <property type="match status" value="1"/>
</dbReference>
<dbReference type="PROSITE" id="PS00035">
    <property type="entry name" value="POU_1"/>
    <property type="match status" value="1"/>
</dbReference>
<dbReference type="PROSITE" id="PS00465">
    <property type="entry name" value="POU_2"/>
    <property type="match status" value="1"/>
</dbReference>
<dbReference type="PROSITE" id="PS51179">
    <property type="entry name" value="POU_3"/>
    <property type="match status" value="1"/>
</dbReference>
<name>PO2F2_MOUSE</name>
<organism>
    <name type="scientific">Mus musculus</name>
    <name type="common">Mouse</name>
    <dbReference type="NCBI Taxonomy" id="10090"/>
    <lineage>
        <taxon>Eukaryota</taxon>
        <taxon>Metazoa</taxon>
        <taxon>Chordata</taxon>
        <taxon>Craniata</taxon>
        <taxon>Vertebrata</taxon>
        <taxon>Euteleostomi</taxon>
        <taxon>Mammalia</taxon>
        <taxon>Eutheria</taxon>
        <taxon>Euarchontoglires</taxon>
        <taxon>Glires</taxon>
        <taxon>Rodentia</taxon>
        <taxon>Myomorpha</taxon>
        <taxon>Muroidea</taxon>
        <taxon>Muridae</taxon>
        <taxon>Murinae</taxon>
        <taxon>Mus</taxon>
        <taxon>Mus</taxon>
    </lineage>
</organism>
<keyword id="KW-0010">Activator</keyword>
<keyword id="KW-0025">Alternative splicing</keyword>
<keyword id="KW-0963">Cytoplasm</keyword>
<keyword id="KW-0238">DNA-binding</keyword>
<keyword id="KW-0371">Homeobox</keyword>
<keyword id="KW-0539">Nucleus</keyword>
<keyword id="KW-1185">Reference proteome</keyword>
<keyword id="KW-0804">Transcription</keyword>
<keyword id="KW-0805">Transcription regulation</keyword>
<gene>
    <name evidence="16" type="primary">Pou2f2</name>
    <name type="synonym">Oct2</name>
    <name type="synonym">Otf2</name>
</gene>
<accession>Q00196</accession>
<accession>Q00197</accession>
<accession>Q00198</accession>
<accession>Q00199</accession>
<accession>Q00200</accession>
<accession>Q00201</accession>
<accession>Q05882</accession>
<accession>Q3KR47</accession>
<accession>Q3U127</accession>
<accession>Q5XML1</accession>
<accession>Q5XML2</accession>
<accession>Q61995</accession>
<accession>Q61996</accession>
<accession>Q64245</accession>
<feature type="chain" id="PRO_0000100715" description="POU domain, class 2, transcription factor 2">
    <location>
        <begin position="1"/>
        <end position="463"/>
    </location>
</feature>
<feature type="domain" description="POU-specific" evidence="4">
    <location>
        <begin position="179"/>
        <end position="253"/>
    </location>
</feature>
<feature type="DNA-binding region" description="Homeobox" evidence="3">
    <location>
        <begin position="281"/>
        <end position="340"/>
    </location>
</feature>
<feature type="region of interest" description="Disordered" evidence="5">
    <location>
        <begin position="1"/>
        <end position="87"/>
    </location>
</feature>
<feature type="region of interest" description="Disordered" evidence="5">
    <location>
        <begin position="159"/>
        <end position="182"/>
    </location>
</feature>
<feature type="region of interest" description="Disordered" evidence="5">
    <location>
        <begin position="259"/>
        <end position="282"/>
    </location>
</feature>
<feature type="region of interest" description="Disordered" evidence="5">
    <location>
        <begin position="341"/>
        <end position="376"/>
    </location>
</feature>
<feature type="region of interest" description="Leucine-zipper" evidence="2">
    <location>
        <begin position="373"/>
        <end position="394"/>
    </location>
</feature>
<feature type="region of interest" description="Disordered" evidence="5">
    <location>
        <begin position="393"/>
        <end position="463"/>
    </location>
</feature>
<feature type="compositionally biased region" description="Basic and acidic residues" evidence="5">
    <location>
        <begin position="12"/>
        <end position="37"/>
    </location>
</feature>
<feature type="compositionally biased region" description="Polar residues" evidence="5">
    <location>
        <begin position="41"/>
        <end position="60"/>
    </location>
</feature>
<feature type="compositionally biased region" description="Pro residues" evidence="5">
    <location>
        <begin position="75"/>
        <end position="85"/>
    </location>
</feature>
<feature type="compositionally biased region" description="Low complexity" evidence="5">
    <location>
        <begin position="259"/>
        <end position="272"/>
    </location>
</feature>
<feature type="compositionally biased region" description="Gly residues" evidence="5">
    <location>
        <begin position="400"/>
        <end position="409"/>
    </location>
</feature>
<feature type="splice variant" id="VSP_002326" description="In isoform OCT2.3 and isoform OCT2.7." evidence="11 12 14">
    <original>K</original>
    <variation>KVGILSGLHLTFWGPGPCLSPPQ</variation>
    <location>
        <position position="62"/>
    </location>
</feature>
<feature type="splice variant" id="VSP_002327" description="In isoform OCT2.6." evidence="14">
    <location>
        <begin position="63"/>
        <end position="101"/>
    </location>
</feature>
<feature type="splice variant" id="VSP_002328" description="In isoform OCT2.2." evidence="13 14">
    <original>Q</original>
    <variation>QAMTRPTLPDPHLSHPQ</variation>
    <location>
        <position position="167"/>
    </location>
</feature>
<feature type="splice variant" id="VSP_002329" description="In isoform OCT2.4." evidence="14">
    <original>VTTLSSAVGTLHPSRTA</original>
    <variation>AQTRALKAATRLLACRA</variation>
    <location>
        <begin position="384"/>
        <end position="400"/>
    </location>
</feature>
<feature type="splice variant" id="VSP_002330" description="In isoform OCT2.4." evidence="14">
    <location>
        <begin position="401"/>
        <end position="463"/>
    </location>
</feature>
<feature type="splice variant" id="VSP_002331" description="In isoform OCT2.5." evidence="13 14">
    <original>PGLWWNPAPYQP</original>
    <variation>STMVGLSSGLSPALMSNNPLATIQALASGGTLPLTSLDGSGNLVLGAAGAAPGSPSLVTSPLFLNHTGLPLLSAPPGVGLVSAAAAAVAASISSKSPGLSSSSSSSSSSTCSDVAAQTPGGPGGPEAGSKAE</variation>
    <location>
        <begin position="452"/>
        <end position="463"/>
    </location>
</feature>
<feature type="splice variant" id="VSP_032188" description="In isoform OCT2.7." evidence="12">
    <original>PGLWWNPAPYQP</original>
    <variation>STMVGLSSGLSPALMSNNPLATIQGACCLMSPHCHQSCPLLGLEPTLPHCCPSHAIPPPCSLHCSPLHPHLSSGKV</variation>
    <location>
        <begin position="452"/>
        <end position="463"/>
    </location>
</feature>
<feature type="sequence conflict" description="In Ref. 2; CAA41004/CAA41005/CAA41006/CAA41008/CAA41009." evidence="15" ref="2">
    <original>A</original>
    <variation>R</variation>
    <location>
        <position position="409"/>
    </location>
</feature>
<feature type="sequence conflict" description="In Ref. 2; CAA41004/CAA41005/CAA41006/CAA41008/CAA41009." evidence="15" ref="2">
    <original>P</original>
    <variation>L</variation>
    <location>
        <position position="411"/>
    </location>
</feature>
<proteinExistence type="evidence at transcript level"/>
<reference key="1">
    <citation type="journal article" date="1990" name="Development">
        <title>Structure and expression of the mouse Oct2a and Oct2b, two differentially spliced products of the same gene.</title>
        <authorList>
            <person name="Hatzopoulos A.K."/>
            <person name="Stoykova A.S."/>
            <person name="Erselius J.R."/>
            <person name="Goulding M.D."/>
            <person name="Neuman T."/>
            <person name="Gruss P."/>
        </authorList>
    </citation>
    <scope>NUCLEOTIDE SEQUENCE [MRNA] (ISOFORMS OCT2.2 AND OCT2.5)</scope>
    <source>
        <tissue>B-cell</tissue>
    </source>
</reference>
<reference key="2">
    <citation type="journal article" date="1991" name="Nucleic Acids Res.">
        <title>Multiple Oct2 isoforms are generated by alternative splicing.</title>
        <authorList>
            <person name="Wirth T."/>
            <person name="Priess A."/>
            <person name="Annweiler A."/>
            <person name="Zwilling S."/>
            <person name="Oeler B."/>
        </authorList>
    </citation>
    <scope>NUCLEOTIDE SEQUENCE [MRNA] (ISOFORMS OCT2.1; OCT2.2; OCT2.3; OCT2.4; OCT2.5 AND OCT2.6)</scope>
    <scope>FUNCTION</scope>
    <source>
        <tissue>Pre-B cell</tissue>
    </source>
</reference>
<reference key="3">
    <citation type="journal article" date="2007" name="Cell Tissue Res.">
        <title>Expression of the Oct-2 transcription factor in mouse mammary gland and cloning and characterization of a novel Oct-2 isoform.</title>
        <authorList>
            <person name="Dong B."/>
            <person name="Zhao F.-Q."/>
        </authorList>
    </citation>
    <scope>NUCLEOTIDE SEQUENCE [MRNA] (ISOFORM OCT2.1)</scope>
    <scope>NUCLEOTIDE SEQUENCE [MRNA] OF 5-263 (ISOFORM OCT2.7)</scope>
    <scope>FUNCTION</scope>
    <scope>SUBCELLULAR LOCATION</scope>
    <scope>TISSUE SPECIFICITY</scope>
    <scope>DEVELOPMENTAL STAGE</scope>
    <source>
        <strain>C3H/HeN</strain>
        <tissue>Mammary gland</tissue>
    </source>
</reference>
<reference key="4">
    <citation type="journal article" date="2005" name="Science">
        <title>The transcriptional landscape of the mammalian genome.</title>
        <authorList>
            <person name="Carninci P."/>
            <person name="Kasukawa T."/>
            <person name="Katayama S."/>
            <person name="Gough J."/>
            <person name="Frith M.C."/>
            <person name="Maeda N."/>
            <person name="Oyama R."/>
            <person name="Ravasi T."/>
            <person name="Lenhard B."/>
            <person name="Wells C."/>
            <person name="Kodzius R."/>
            <person name="Shimokawa K."/>
            <person name="Bajic V.B."/>
            <person name="Brenner S.E."/>
            <person name="Batalov S."/>
            <person name="Forrest A.R."/>
            <person name="Zavolan M."/>
            <person name="Davis M.J."/>
            <person name="Wilming L.G."/>
            <person name="Aidinis V."/>
            <person name="Allen J.E."/>
            <person name="Ambesi-Impiombato A."/>
            <person name="Apweiler R."/>
            <person name="Aturaliya R.N."/>
            <person name="Bailey T.L."/>
            <person name="Bansal M."/>
            <person name="Baxter L."/>
            <person name="Beisel K.W."/>
            <person name="Bersano T."/>
            <person name="Bono H."/>
            <person name="Chalk A.M."/>
            <person name="Chiu K.P."/>
            <person name="Choudhary V."/>
            <person name="Christoffels A."/>
            <person name="Clutterbuck D.R."/>
            <person name="Crowe M.L."/>
            <person name="Dalla E."/>
            <person name="Dalrymple B.P."/>
            <person name="de Bono B."/>
            <person name="Della Gatta G."/>
            <person name="di Bernardo D."/>
            <person name="Down T."/>
            <person name="Engstrom P."/>
            <person name="Fagiolini M."/>
            <person name="Faulkner G."/>
            <person name="Fletcher C.F."/>
            <person name="Fukushima T."/>
            <person name="Furuno M."/>
            <person name="Futaki S."/>
            <person name="Gariboldi M."/>
            <person name="Georgii-Hemming P."/>
            <person name="Gingeras T.R."/>
            <person name="Gojobori T."/>
            <person name="Green R.E."/>
            <person name="Gustincich S."/>
            <person name="Harbers M."/>
            <person name="Hayashi Y."/>
            <person name="Hensch T.K."/>
            <person name="Hirokawa N."/>
            <person name="Hill D."/>
            <person name="Huminiecki L."/>
            <person name="Iacono M."/>
            <person name="Ikeo K."/>
            <person name="Iwama A."/>
            <person name="Ishikawa T."/>
            <person name="Jakt M."/>
            <person name="Kanapin A."/>
            <person name="Katoh M."/>
            <person name="Kawasawa Y."/>
            <person name="Kelso J."/>
            <person name="Kitamura H."/>
            <person name="Kitano H."/>
            <person name="Kollias G."/>
            <person name="Krishnan S.P."/>
            <person name="Kruger A."/>
            <person name="Kummerfeld S.K."/>
            <person name="Kurochkin I.V."/>
            <person name="Lareau L.F."/>
            <person name="Lazarevic D."/>
            <person name="Lipovich L."/>
            <person name="Liu J."/>
            <person name="Liuni S."/>
            <person name="McWilliam S."/>
            <person name="Madan Babu M."/>
            <person name="Madera M."/>
            <person name="Marchionni L."/>
            <person name="Matsuda H."/>
            <person name="Matsuzawa S."/>
            <person name="Miki H."/>
            <person name="Mignone F."/>
            <person name="Miyake S."/>
            <person name="Morris K."/>
            <person name="Mottagui-Tabar S."/>
            <person name="Mulder N."/>
            <person name="Nakano N."/>
            <person name="Nakauchi H."/>
            <person name="Ng P."/>
            <person name="Nilsson R."/>
            <person name="Nishiguchi S."/>
            <person name="Nishikawa S."/>
            <person name="Nori F."/>
            <person name="Ohara O."/>
            <person name="Okazaki Y."/>
            <person name="Orlando V."/>
            <person name="Pang K.C."/>
            <person name="Pavan W.J."/>
            <person name="Pavesi G."/>
            <person name="Pesole G."/>
            <person name="Petrovsky N."/>
            <person name="Piazza S."/>
            <person name="Reed J."/>
            <person name="Reid J.F."/>
            <person name="Ring B.Z."/>
            <person name="Ringwald M."/>
            <person name="Rost B."/>
            <person name="Ruan Y."/>
            <person name="Salzberg S.L."/>
            <person name="Sandelin A."/>
            <person name="Schneider C."/>
            <person name="Schoenbach C."/>
            <person name="Sekiguchi K."/>
            <person name="Semple C.A."/>
            <person name="Seno S."/>
            <person name="Sessa L."/>
            <person name="Sheng Y."/>
            <person name="Shibata Y."/>
            <person name="Shimada H."/>
            <person name="Shimada K."/>
            <person name="Silva D."/>
            <person name="Sinclair B."/>
            <person name="Sperling S."/>
            <person name="Stupka E."/>
            <person name="Sugiura K."/>
            <person name="Sultana R."/>
            <person name="Takenaka Y."/>
            <person name="Taki K."/>
            <person name="Tammoja K."/>
            <person name="Tan S.L."/>
            <person name="Tang S."/>
            <person name="Taylor M.S."/>
            <person name="Tegner J."/>
            <person name="Teichmann S.A."/>
            <person name="Ueda H.R."/>
            <person name="van Nimwegen E."/>
            <person name="Verardo R."/>
            <person name="Wei C.L."/>
            <person name="Yagi K."/>
            <person name="Yamanishi H."/>
            <person name="Zabarovsky E."/>
            <person name="Zhu S."/>
            <person name="Zimmer A."/>
            <person name="Hide W."/>
            <person name="Bult C."/>
            <person name="Grimmond S.M."/>
            <person name="Teasdale R.D."/>
            <person name="Liu E.T."/>
            <person name="Brusic V."/>
            <person name="Quackenbush J."/>
            <person name="Wahlestedt C."/>
            <person name="Mattick J.S."/>
            <person name="Hume D.A."/>
            <person name="Kai C."/>
            <person name="Sasaki D."/>
            <person name="Tomaru Y."/>
            <person name="Fukuda S."/>
            <person name="Kanamori-Katayama M."/>
            <person name="Suzuki M."/>
            <person name="Aoki J."/>
            <person name="Arakawa T."/>
            <person name="Iida J."/>
            <person name="Imamura K."/>
            <person name="Itoh M."/>
            <person name="Kato T."/>
            <person name="Kawaji H."/>
            <person name="Kawagashira N."/>
            <person name="Kawashima T."/>
            <person name="Kojima M."/>
            <person name="Kondo S."/>
            <person name="Konno H."/>
            <person name="Nakano K."/>
            <person name="Ninomiya N."/>
            <person name="Nishio T."/>
            <person name="Okada M."/>
            <person name="Plessy C."/>
            <person name="Shibata K."/>
            <person name="Shiraki T."/>
            <person name="Suzuki S."/>
            <person name="Tagami M."/>
            <person name="Waki K."/>
            <person name="Watahiki A."/>
            <person name="Okamura-Oho Y."/>
            <person name="Suzuki H."/>
            <person name="Kawai J."/>
            <person name="Hayashizaki Y."/>
        </authorList>
    </citation>
    <scope>NUCLEOTIDE SEQUENCE [LARGE SCALE MRNA]</scope>
    <source>
        <strain>NOD</strain>
        <tissue>Spleen</tissue>
    </source>
</reference>
<reference key="5">
    <citation type="journal article" date="2004" name="Genome Res.">
        <title>The status, quality, and expansion of the NIH full-length cDNA project: the Mammalian Gene Collection (MGC).</title>
        <authorList>
            <consortium name="The MGC Project Team"/>
        </authorList>
    </citation>
    <scope>NUCLEOTIDE SEQUENCE [LARGE SCALE MRNA] (ISOFORMS OCT2.1 AND OCT2.3)</scope>
</reference>
<reference key="6">
    <citation type="journal article" date="1994" name="Biol. Chem. Hoppe-Seyler">
        <title>Short introns interrupting the Oct-2 POU domain may prevent recombination between POU family genes without interfering with potential POU domain 'shuffling' in evolution.</title>
        <authorList>
            <person name="Matsuo K."/>
            <person name="Clay O."/>
            <person name="Kuenzler P."/>
            <person name="Georgiev O."/>
            <person name="Urbanek P."/>
            <person name="Schaffner W."/>
        </authorList>
    </citation>
    <scope>NUCLEOTIDE SEQUENCE [GENOMIC DNA] OF 167-361 (ISOFORM OCT2.2)</scope>
    <source>
        <strain>129/Sv</strain>
    </source>
</reference>
<reference key="7">
    <citation type="journal article" date="1990" name="Nucleic Acids Res.">
        <title>Cloning and sequencing of POU-boxes expressed in mouse testis.</title>
        <authorList>
            <person name="Goldsborough A."/>
            <person name="Ashworth A."/>
            <person name="Willison K.R."/>
        </authorList>
    </citation>
    <scope>NUCLEOTIDE SEQUENCE [MRNA] OF 203-325 (ISOFORM OCT2.1)</scope>
    <source>
        <strain>T6 / TW1</strain>
        <tissue>Testis</tissue>
    </source>
</reference>
<reference key="8">
    <citation type="journal article" date="1992" name="Dokl. Akad. Nauk SSSR">
        <title>Interaction of Oct-binding transcription factors with a large series of 'noncanonical' oct-sequences. Primary sequence of murine Oct-2B cDNA.</title>
        <authorList>
            <person name="Stepchenko A.G."/>
        </authorList>
    </citation>
    <scope>PARTIAL NUCLEOTIDE SEQUENCE [MRNA] (ISOFORM OCT2.2)</scope>
</reference>
<reference key="9">
    <citation type="journal article" date="1992" name="J. Biol. Chem.">
        <title>Alternative splicing of the Oct-2 transcription factor RNA is differentially regulated in neuronal cells and B cells and results in protein isoforms with opposite effects on the activity of octamer/TAATGARAT-containing promoters.</title>
        <authorList>
            <person name="Lillycrop K.A."/>
            <person name="Latchman D.S."/>
        </authorList>
    </citation>
    <scope>FUNCTION</scope>
    <scope>TISSUE SPECIFICITY</scope>
</reference>
<reference key="10">
    <citation type="journal article" date="1992" name="Neuron">
        <title>Mini-Oct and Oct-2c: two novel, functionally diverse murine Oct-2 gene products are differentially expressed in the CNS.</title>
        <authorList>
            <person name="Stoykova A.S."/>
            <person name="Sterrer S."/>
            <person name="Erselius J.R."/>
            <person name="Hatzopoulos A.K."/>
            <person name="Gruss P."/>
        </authorList>
    </citation>
    <scope>ALTERNATIVE SPLICING</scope>
</reference>
<reference key="11">
    <citation type="journal article" date="1994" name="Mol. Cell. Biol.">
        <title>Repression of a herpes simplex virus immediate-early promoter by the Oct-2 transcription factor is dependent on an inhibitory region at the N terminus of the protein.</title>
        <authorList>
            <person name="Lillycrop K.A."/>
            <person name="Dawson S.J."/>
            <person name="Estridge J.K."/>
            <person name="Gerster T."/>
            <person name="Matthias P."/>
            <person name="Latchman D.S."/>
        </authorList>
    </citation>
    <scope>FUNCTION</scope>
</reference>
<reference key="12">
    <citation type="journal article" date="2012" name="J. Exp. Med.">
        <title>B and T cells collaborate in antiviral responses via IL-6, IL-21, and transcriptional activator and coactivator, Oct2 and OBF-1.</title>
        <authorList>
            <person name="Karnowski A."/>
            <person name="Chevrier S."/>
            <person name="Belz G.T."/>
            <person name="Mount A."/>
            <person name="Emslie D."/>
            <person name="D'Costa K."/>
            <person name="Tarlinton D.M."/>
            <person name="Kallies A."/>
            <person name="Corcoran L.M."/>
        </authorList>
    </citation>
    <scope>FUNCTION</scope>
    <scope>TISSUE SPECIFICITY</scope>
    <scope>DISRUPTION PHENOTYPE</scope>
    <scope>INDUCTION BY LPS</scope>
    <scope>ACTIVITY REGULATION</scope>
</reference>
<sequence length="463" mass="49439">MVHSSMGAPEIRMSKPLEAEKQSLDSPSEHTDTERNGPDINHQNPQNKASPFSVSPTGPSTKIKAEDPSGDSAPAAPPPPQPAQPHLPQAQLMLTGSQLAGDIQQLLQLQQLVLVPGHHLQPPAQFLLPQAQQSQPGLLPTPNLFQLPQQTQGALLTSQPRAGLPTQPPKCLEPPSHPEEPSDLEELEQFARTFKQRRIKLGFTQGDVGLAMGKLYGNDFSQTTISRFEALNLSFKNMCKLKPLLEKWLNDAETMSVDSSLPSPNQLSSPSLGFDGLPGRRRKKRTSIETNVRFALEKSFLANQKPTSEEILLIAEQLHMEKEVIRVWFCNRRQKEKRINPCSAAPMLPSPGKPTSYSPHLVTPQGGAGTLPLSQASSSLSTTVTTLSSAVGTLHPSRTAGGGGGGGGAAPPLNSIPSVTPPPPATTNSTNPSPQGSHSAIGLSGLNPSAGPGLWWNPAPYQP</sequence>
<evidence type="ECO:0000250" key="1">
    <source>
        <dbReference type="UniProtKB" id="P09086"/>
    </source>
</evidence>
<evidence type="ECO:0000255" key="2"/>
<evidence type="ECO:0000255" key="3">
    <source>
        <dbReference type="PROSITE-ProRule" id="PRU00108"/>
    </source>
</evidence>
<evidence type="ECO:0000255" key="4">
    <source>
        <dbReference type="PROSITE-ProRule" id="PRU00530"/>
    </source>
</evidence>
<evidence type="ECO:0000256" key="5">
    <source>
        <dbReference type="SAM" id="MobiDB-lite"/>
    </source>
</evidence>
<evidence type="ECO:0000269" key="6">
    <source>
    </source>
</evidence>
<evidence type="ECO:0000269" key="7">
    <source>
    </source>
</evidence>
<evidence type="ECO:0000269" key="8">
    <source>
    </source>
</evidence>
<evidence type="ECO:0000269" key="9">
    <source>
    </source>
</evidence>
<evidence type="ECO:0000269" key="10">
    <source>
    </source>
</evidence>
<evidence type="ECO:0000303" key="11">
    <source>
    </source>
</evidence>
<evidence type="ECO:0000303" key="12">
    <source>
    </source>
</evidence>
<evidence type="ECO:0000303" key="13">
    <source>
    </source>
</evidence>
<evidence type="ECO:0000303" key="14">
    <source>
    </source>
</evidence>
<evidence type="ECO:0000305" key="15"/>
<evidence type="ECO:0000312" key="16">
    <source>
        <dbReference type="MGI" id="MGI:101897"/>
    </source>
</evidence>
<comment type="function">
    <text evidence="1 6 7 8 9 10">Transcription factor that specifically binds to the octamer motif (5'-ATTTGCAT-3') (PubMed:1281152, PubMed:2011512). Regulates IL6 expression in B cells with POU2AF1 (PubMed:23045607). Regulates transcription in a number of tissues in addition to activating immunoglobulin gene expression. Modulates transcription transactivation by NR3C1, AR and PGR.</text>
</comment>
<comment type="function">
    <molecule>Isoform OCT2.1</molecule>
    <text evidence="6 8">Activates octamer-containing promoters.</text>
</comment>
<comment type="function">
    <molecule>Isoform OCT2.2</molecule>
    <text evidence="6 8">Activates octamer-containing promoters.</text>
</comment>
<comment type="function">
    <molecule>Isoform OCT2.3</molecule>
    <text evidence="6 8">Activates octamer-containing promoters.</text>
</comment>
<comment type="function">
    <molecule>Isoform OCT2.4</molecule>
    <text evidence="6 8">Represses some promoters and activate others.</text>
</comment>
<comment type="function">
    <molecule>Isoform OCT2.5</molecule>
    <text evidence="1 6 8">Represses some promoters and activate others (PubMed:1281152, PubMed:2011512). Activates the U2 small nuclear RNA (snRNA) promoter (By similarity).</text>
</comment>
<comment type="function">
    <molecule>Isoform OCT2.7</molecule>
    <text evidence="7">Unable to bind to the octamer motif, but can still activate the beta-casein gene promoter at low levels.</text>
</comment>
<comment type="activity regulation">
    <text evidence="9">Transactivation activity is enhanced by transcriptional coactivator POU2AF1.</text>
</comment>
<comment type="subunit">
    <text evidence="1">Interacts with NR3C1, AR and PGR. Interacts with POU2AF1; the interaction increases POU2F2 transactivation activity.</text>
</comment>
<comment type="subcellular location">
    <subcellularLocation>
        <location evidence="7">Cytoplasm</location>
    </subcellularLocation>
    <subcellularLocation>
        <location evidence="3 4 7">Nucleus</location>
    </subcellularLocation>
    <text>In alveolus epithelial cells of mammary glands, present in the nucleus and cytoplasm. In HC11 mammary epithelial cells, present in the nucleus and preinuclear regions.</text>
</comment>
<comment type="alternative products">
    <event type="alternative splicing"/>
    <isoform>
        <id>Q00196-1</id>
        <name>OCT2.1</name>
        <name>Major form</name>
        <sequence type="displayed"/>
    </isoform>
    <isoform>
        <id>Q00196-2</id>
        <name>OCT2.2</name>
        <name>OCT2a</name>
        <sequence type="described" ref="VSP_002328"/>
    </isoform>
    <isoform>
        <id>Q00196-3</id>
        <name>OCT2.3</name>
        <sequence type="described" ref="VSP_002326"/>
    </isoform>
    <isoform>
        <id>Q00196-4</id>
        <name>OCT2.4</name>
        <sequence type="described" ref="VSP_002329 VSP_002330"/>
    </isoform>
    <isoform>
        <id>Q00196-5</id>
        <name>OCT2.5</name>
        <name>OCT2b</name>
        <sequence type="described" ref="VSP_002331"/>
    </isoform>
    <isoform>
        <id>Q00196-6</id>
        <name>OCT2.6</name>
        <sequence type="described" ref="VSP_002327"/>
    </isoform>
    <isoform>
        <id>Q00196-7</id>
        <name>OCT2.7</name>
        <sequence type="described" ref="VSP_002326 VSP_032188"/>
    </isoform>
    <text>Additional isoforms seem to exist.</text>
</comment>
<comment type="tissue specificity">
    <text evidence="6 7 9">Highest in B cells, but also present in brain (neuronal and glial cells), intestine, kidney, and testes.</text>
</comment>
<comment type="tissue specificity">
    <molecule>Isoform OCT2.1</molecule>
    <text evidence="6">Expressed at higher levels in B-cells than in neuronal cells.</text>
</comment>
<comment type="tissue specificity">
    <molecule>Isoform OCT2.2</molecule>
    <text evidence="6">Expressed in neuronal cell lines and brain, but not dorsal root ganglia.</text>
</comment>
<comment type="tissue specificity">
    <molecule>Isoform OCT2.3</molecule>
    <text evidence="6">Expressed at lower levels in neuronal cells than in B cells.</text>
</comment>
<comment type="tissue specificity">
    <molecule>Isoform OCT2.4</molecule>
    <text evidence="6">Expressed in neuronal cell lines, and at lower levels in neuroblastoma and dorsal root ganglia.</text>
</comment>
<comment type="tissue specificity">
    <molecule>Isoform OCT2.5</molecule>
    <text evidence="6">Widely expressed in the developing nervous system but expression is confined to very specific regions in the adult brain, it is expressed at a lower level in B cells.</text>
</comment>
<comment type="tissue specificity">
    <molecule>Isoform OCT2.6</molecule>
    <text evidence="6">Either absent in, or expressed at very low levels in neuronal cells and brain.</text>
</comment>
<comment type="tissue specificity">
    <molecule>Isoform OCT2.7</molecule>
    <text evidence="7">Expressed in all tissues tested: mammary gland, liver, spleen, lung, kidney intestine, uterus and ovary of a virgin mouse. Levels of isoform OCT2.7 are highest in spleen and lung. In mammary gland, expression is localized to the alveolus epithelial cells.</text>
</comment>
<comment type="developmental stage">
    <text evidence="7">Widely but not homogeneously expressed in developing nervous system. Expression levels in mammary glands are barely detectable in virgin mice, levels increase during pregnancy, reaching a maximum during late pregnancy, then decrease during lactation becoming very low post-lactation.</text>
</comment>
<comment type="induction">
    <text evidence="9">In B cells, expression is highly increased upon activation by LPS or CpG.</text>
</comment>
<comment type="disruption phenotype">
    <text evidence="9">Mutants show normal development of germinal center B cells when infected by influenza virus.</text>
</comment>
<comment type="miscellaneous">
    <molecule>Isoform OCT2.2</molecule>
    <text>The isoform OCT2b described in PubMed:7888080 corresponds to the isoform OCT2a of PubMed:1976089. To avoid any confusion, we use the nomenclature from PubMed:2011512 to describe the different isoforms.</text>
</comment>
<comment type="miscellaneous">
    <molecule>Isoform OCT2.5</molecule>
    <text>The isoform OCT2b described in PubMed:7888080 corresponds to the isoform OCT2a of PubMed:1976089. To avoid any confusion, we use the nomenclature from PubMed:2011512 to describe the different isoforms.</text>
</comment>
<comment type="similarity">
    <text evidence="15">Belongs to the POU transcription factor family. Class-2 subfamily.</text>
</comment>
<comment type="sequence caution" evidence="15">
    <conflict type="erroneous initiation">
        <sequence resource="EMBL-CDS" id="AAU95617"/>
    </conflict>
    <text>Truncated N-terminus.</text>
</comment>
<comment type="sequence caution" evidence="15">
    <conflict type="frameshift">
        <sequence resource="EMBL-CDS" id="BAE33673"/>
    </conflict>
</comment>